<proteinExistence type="inferred from homology"/>
<gene>
    <name evidence="1" type="primary">prs1</name>
    <name type="ordered locus">M6_Spy0018</name>
</gene>
<sequence length="320" mass="35044">MSYSDLKLFALSSNKELAEKVASAMGIQLGKSTVRQFSDGEIQVNIEESIRGHHVFILQSTSSPVNDNLMEILIMVDALKRASAEKISVVMPYYGYARQDRKARSREPITSKLVANMLEVAGVDRLLTVDLHAAQIQGFFDIPVDHLMGAPLIADYFDRHGLVGEDVVVVSPDHGGVTRARKLAQFLQTPIAIIDKRRSVDKMNTSEVMNIIGNVSGKKCILIDDMIDTAGTICHAADALAEAGATAVYASCTHPVLSGPALDNIQRSAIEKLIVLDTIYLPKERLIDKIEQISIADLVAEAIIRIHEKRPLSPLFEMGN</sequence>
<name>KPRS1_STRP6</name>
<keyword id="KW-0067">ATP-binding</keyword>
<keyword id="KW-0963">Cytoplasm</keyword>
<keyword id="KW-0418">Kinase</keyword>
<keyword id="KW-0460">Magnesium</keyword>
<keyword id="KW-0479">Metal-binding</keyword>
<keyword id="KW-0545">Nucleotide biosynthesis</keyword>
<keyword id="KW-0547">Nucleotide-binding</keyword>
<keyword id="KW-0808">Transferase</keyword>
<dbReference type="EC" id="2.7.6.1" evidence="1"/>
<dbReference type="EMBL" id="CP000003">
    <property type="protein sequence ID" value="AAT86153.1"/>
    <property type="status" value="ALT_INIT"/>
    <property type="molecule type" value="Genomic_DNA"/>
</dbReference>
<dbReference type="RefSeq" id="WP_002986722.1">
    <property type="nucleotide sequence ID" value="NC_006086.1"/>
</dbReference>
<dbReference type="SMR" id="Q5XEL0"/>
<dbReference type="KEGG" id="spa:M6_Spy0018"/>
<dbReference type="HOGENOM" id="CLU_033546_4_0_9"/>
<dbReference type="UniPathway" id="UPA00087">
    <property type="reaction ID" value="UER00172"/>
</dbReference>
<dbReference type="Proteomes" id="UP000001167">
    <property type="component" value="Chromosome"/>
</dbReference>
<dbReference type="GO" id="GO:0005737">
    <property type="term" value="C:cytoplasm"/>
    <property type="evidence" value="ECO:0007669"/>
    <property type="project" value="UniProtKB-SubCell"/>
</dbReference>
<dbReference type="GO" id="GO:0002189">
    <property type="term" value="C:ribose phosphate diphosphokinase complex"/>
    <property type="evidence" value="ECO:0007669"/>
    <property type="project" value="TreeGrafter"/>
</dbReference>
<dbReference type="GO" id="GO:0005524">
    <property type="term" value="F:ATP binding"/>
    <property type="evidence" value="ECO:0007669"/>
    <property type="project" value="UniProtKB-KW"/>
</dbReference>
<dbReference type="GO" id="GO:0016301">
    <property type="term" value="F:kinase activity"/>
    <property type="evidence" value="ECO:0007669"/>
    <property type="project" value="UniProtKB-KW"/>
</dbReference>
<dbReference type="GO" id="GO:0000287">
    <property type="term" value="F:magnesium ion binding"/>
    <property type="evidence" value="ECO:0007669"/>
    <property type="project" value="UniProtKB-UniRule"/>
</dbReference>
<dbReference type="GO" id="GO:0004749">
    <property type="term" value="F:ribose phosphate diphosphokinase activity"/>
    <property type="evidence" value="ECO:0007669"/>
    <property type="project" value="UniProtKB-UniRule"/>
</dbReference>
<dbReference type="GO" id="GO:0006015">
    <property type="term" value="P:5-phosphoribose 1-diphosphate biosynthetic process"/>
    <property type="evidence" value="ECO:0007669"/>
    <property type="project" value="UniProtKB-UniRule"/>
</dbReference>
<dbReference type="GO" id="GO:0006164">
    <property type="term" value="P:purine nucleotide biosynthetic process"/>
    <property type="evidence" value="ECO:0007669"/>
    <property type="project" value="TreeGrafter"/>
</dbReference>
<dbReference type="GO" id="GO:0009156">
    <property type="term" value="P:ribonucleoside monophosphate biosynthetic process"/>
    <property type="evidence" value="ECO:0007669"/>
    <property type="project" value="InterPro"/>
</dbReference>
<dbReference type="CDD" id="cd06223">
    <property type="entry name" value="PRTases_typeI"/>
    <property type="match status" value="1"/>
</dbReference>
<dbReference type="FunFam" id="3.40.50.2020:FF:000001">
    <property type="entry name" value="Ribose-phosphate pyrophosphokinase"/>
    <property type="match status" value="1"/>
</dbReference>
<dbReference type="Gene3D" id="3.40.50.2020">
    <property type="match status" value="2"/>
</dbReference>
<dbReference type="HAMAP" id="MF_00583_B">
    <property type="entry name" value="RibP_PPkinase_B"/>
    <property type="match status" value="1"/>
</dbReference>
<dbReference type="InterPro" id="IPR000842">
    <property type="entry name" value="PRib_PP_synth_CS"/>
</dbReference>
<dbReference type="InterPro" id="IPR029099">
    <property type="entry name" value="Pribosyltran_N"/>
</dbReference>
<dbReference type="InterPro" id="IPR000836">
    <property type="entry name" value="PRibTrfase_dom"/>
</dbReference>
<dbReference type="InterPro" id="IPR029057">
    <property type="entry name" value="PRTase-like"/>
</dbReference>
<dbReference type="InterPro" id="IPR005946">
    <property type="entry name" value="Rib-P_diPkinase"/>
</dbReference>
<dbReference type="InterPro" id="IPR037515">
    <property type="entry name" value="Rib-P_diPkinase_bac"/>
</dbReference>
<dbReference type="NCBIfam" id="NF002320">
    <property type="entry name" value="PRK01259.1"/>
    <property type="match status" value="1"/>
</dbReference>
<dbReference type="NCBIfam" id="NF002618">
    <property type="entry name" value="PRK02269.1"/>
    <property type="match status" value="1"/>
</dbReference>
<dbReference type="NCBIfam" id="TIGR01251">
    <property type="entry name" value="ribP_PPkin"/>
    <property type="match status" value="1"/>
</dbReference>
<dbReference type="PANTHER" id="PTHR10210">
    <property type="entry name" value="RIBOSE-PHOSPHATE DIPHOSPHOKINASE FAMILY MEMBER"/>
    <property type="match status" value="1"/>
</dbReference>
<dbReference type="PANTHER" id="PTHR10210:SF41">
    <property type="entry name" value="RIBOSE-PHOSPHATE PYROPHOSPHOKINASE 1, CHLOROPLASTIC"/>
    <property type="match status" value="1"/>
</dbReference>
<dbReference type="Pfam" id="PF14572">
    <property type="entry name" value="Pribosyl_synth"/>
    <property type="match status" value="1"/>
</dbReference>
<dbReference type="Pfam" id="PF13793">
    <property type="entry name" value="Pribosyltran_N"/>
    <property type="match status" value="1"/>
</dbReference>
<dbReference type="SMART" id="SM01400">
    <property type="entry name" value="Pribosyltran_N"/>
    <property type="match status" value="1"/>
</dbReference>
<dbReference type="SUPFAM" id="SSF53271">
    <property type="entry name" value="PRTase-like"/>
    <property type="match status" value="1"/>
</dbReference>
<dbReference type="PROSITE" id="PS00114">
    <property type="entry name" value="PRPP_SYNTHASE"/>
    <property type="match status" value="1"/>
</dbReference>
<evidence type="ECO:0000255" key="1">
    <source>
        <dbReference type="HAMAP-Rule" id="MF_00583"/>
    </source>
</evidence>
<evidence type="ECO:0000305" key="2"/>
<protein>
    <recommendedName>
        <fullName evidence="1">Ribose-phosphate pyrophosphokinase 1</fullName>
        <shortName evidence="1">RPPK 1</shortName>
        <ecNumber evidence="1">2.7.6.1</ecNumber>
    </recommendedName>
    <alternativeName>
        <fullName evidence="1">5-phospho-D-ribosyl alpha-1-diphosphate synthase 1</fullName>
    </alternativeName>
    <alternativeName>
        <fullName evidence="1">Phosphoribosyl diphosphate synthase 1</fullName>
    </alternativeName>
    <alternativeName>
        <fullName evidence="1">Phosphoribosyl pyrophosphate synthase 1</fullName>
        <shortName evidence="1">P-Rib-PP synthase 1</shortName>
        <shortName evidence="1">PRPP synthase 1</shortName>
        <shortName evidence="1">PRPPase 1</shortName>
    </alternativeName>
</protein>
<feature type="chain" id="PRO_0000141212" description="Ribose-phosphate pyrophosphokinase 1">
    <location>
        <begin position="1"/>
        <end position="320"/>
    </location>
</feature>
<feature type="active site" evidence="1">
    <location>
        <position position="196"/>
    </location>
</feature>
<feature type="binding site" evidence="1">
    <location>
        <begin position="39"/>
        <end position="41"/>
    </location>
    <ligand>
        <name>ATP</name>
        <dbReference type="ChEBI" id="CHEBI:30616"/>
    </ligand>
</feature>
<feature type="binding site" evidence="1">
    <location>
        <begin position="98"/>
        <end position="99"/>
    </location>
    <ligand>
        <name>ATP</name>
        <dbReference type="ChEBI" id="CHEBI:30616"/>
    </ligand>
</feature>
<feature type="binding site" evidence="1">
    <location>
        <position position="132"/>
    </location>
    <ligand>
        <name>Mg(2+)</name>
        <dbReference type="ChEBI" id="CHEBI:18420"/>
        <label>1</label>
    </ligand>
</feature>
<feature type="binding site" evidence="1">
    <location>
        <position position="173"/>
    </location>
    <ligand>
        <name>Mg(2+)</name>
        <dbReference type="ChEBI" id="CHEBI:18420"/>
        <label>2</label>
    </ligand>
</feature>
<feature type="binding site" evidence="1">
    <location>
        <position position="198"/>
    </location>
    <ligand>
        <name>D-ribose 5-phosphate</name>
        <dbReference type="ChEBI" id="CHEBI:78346"/>
    </ligand>
</feature>
<feature type="binding site" evidence="1">
    <location>
        <position position="224"/>
    </location>
    <ligand>
        <name>D-ribose 5-phosphate</name>
        <dbReference type="ChEBI" id="CHEBI:78346"/>
    </ligand>
</feature>
<feature type="binding site" evidence="1">
    <location>
        <begin position="228"/>
        <end position="232"/>
    </location>
    <ligand>
        <name>D-ribose 5-phosphate</name>
        <dbReference type="ChEBI" id="CHEBI:78346"/>
    </ligand>
</feature>
<comment type="function">
    <text evidence="1">Involved in the biosynthesis of the central metabolite phospho-alpha-D-ribosyl-1-pyrophosphate (PRPP) via the transfer of pyrophosphoryl group from ATP to 1-hydroxyl of ribose-5-phosphate (Rib-5-P).</text>
</comment>
<comment type="catalytic activity">
    <reaction evidence="1">
        <text>D-ribose 5-phosphate + ATP = 5-phospho-alpha-D-ribose 1-diphosphate + AMP + H(+)</text>
        <dbReference type="Rhea" id="RHEA:15609"/>
        <dbReference type="ChEBI" id="CHEBI:15378"/>
        <dbReference type="ChEBI" id="CHEBI:30616"/>
        <dbReference type="ChEBI" id="CHEBI:58017"/>
        <dbReference type="ChEBI" id="CHEBI:78346"/>
        <dbReference type="ChEBI" id="CHEBI:456215"/>
        <dbReference type="EC" id="2.7.6.1"/>
    </reaction>
</comment>
<comment type="cofactor">
    <cofactor evidence="1">
        <name>Mg(2+)</name>
        <dbReference type="ChEBI" id="CHEBI:18420"/>
    </cofactor>
    <text evidence="1">Binds 2 Mg(2+) ions per subunit.</text>
</comment>
<comment type="pathway">
    <text evidence="1">Metabolic intermediate biosynthesis; 5-phospho-alpha-D-ribose 1-diphosphate biosynthesis; 5-phospho-alpha-D-ribose 1-diphosphate from D-ribose 5-phosphate (route I): step 1/1.</text>
</comment>
<comment type="subunit">
    <text evidence="1">Homohexamer.</text>
</comment>
<comment type="subcellular location">
    <subcellularLocation>
        <location evidence="1">Cytoplasm</location>
    </subcellularLocation>
</comment>
<comment type="similarity">
    <text evidence="1">Belongs to the ribose-phosphate pyrophosphokinase family. Class I subfamily.</text>
</comment>
<comment type="sequence caution" evidence="2">
    <conflict type="erroneous initiation">
        <sequence resource="EMBL-CDS" id="AAT86153"/>
    </conflict>
    <text>Extended N-terminus.</text>
</comment>
<accession>Q5XEL0</accession>
<organism>
    <name type="scientific">Streptococcus pyogenes serotype M6 (strain ATCC BAA-946 / MGAS10394)</name>
    <dbReference type="NCBI Taxonomy" id="286636"/>
    <lineage>
        <taxon>Bacteria</taxon>
        <taxon>Bacillati</taxon>
        <taxon>Bacillota</taxon>
        <taxon>Bacilli</taxon>
        <taxon>Lactobacillales</taxon>
        <taxon>Streptococcaceae</taxon>
        <taxon>Streptococcus</taxon>
    </lineage>
</organism>
<reference key="1">
    <citation type="journal article" date="2004" name="J. Infect. Dis.">
        <title>Progress toward characterization of the group A Streptococcus metagenome: complete genome sequence of a macrolide-resistant serotype M6 strain.</title>
        <authorList>
            <person name="Banks D.J."/>
            <person name="Porcella S.F."/>
            <person name="Barbian K.D."/>
            <person name="Beres S.B."/>
            <person name="Philips L.E."/>
            <person name="Voyich J.M."/>
            <person name="DeLeo F.R."/>
            <person name="Martin J.M."/>
            <person name="Somerville G.A."/>
            <person name="Musser J.M."/>
        </authorList>
    </citation>
    <scope>NUCLEOTIDE SEQUENCE [LARGE SCALE GENOMIC DNA]</scope>
    <source>
        <strain>ATCC BAA-946 / MGAS10394</strain>
    </source>
</reference>